<keyword id="KW-0002">3D-structure</keyword>
<keyword id="KW-0056">Arginine metabolism</keyword>
<keyword id="KW-0963">Cytoplasm</keyword>
<keyword id="KW-1185">Reference proteome</keyword>
<keyword id="KW-0808">Transferase</keyword>
<gene>
    <name type="primary">arcB</name>
    <name type="ordered locus">MYPE6090</name>
</gene>
<dbReference type="EC" id="2.1.3.3" evidence="1"/>
<dbReference type="EMBL" id="BA000026">
    <property type="protein sequence ID" value="BAC44399.1"/>
    <property type="molecule type" value="Genomic_DNA"/>
</dbReference>
<dbReference type="RefSeq" id="WP_011077431.1">
    <property type="nucleotide sequence ID" value="NC_004432.1"/>
</dbReference>
<dbReference type="PDB" id="4AMU">
    <property type="method" value="X-ray"/>
    <property type="resolution" value="2.50 A"/>
    <property type="chains" value="A/B/C/D=1-342"/>
</dbReference>
<dbReference type="PDB" id="4ANF">
    <property type="method" value="X-ray"/>
    <property type="resolution" value="2.60 A"/>
    <property type="chains" value="A/B/C/D=1-342"/>
</dbReference>
<dbReference type="PDBsum" id="4AMU"/>
<dbReference type="PDBsum" id="4ANF"/>
<dbReference type="SMR" id="Q8EVF5"/>
<dbReference type="FunCoup" id="Q8EVF5">
    <property type="interactions" value="206"/>
</dbReference>
<dbReference type="STRING" id="272633.gene:10731726"/>
<dbReference type="KEGG" id="mpe:MYPE6090"/>
<dbReference type="eggNOG" id="COG0078">
    <property type="taxonomic scope" value="Bacteria"/>
</dbReference>
<dbReference type="HOGENOM" id="CLU_043846_3_1_14"/>
<dbReference type="InParanoid" id="Q8EVF5"/>
<dbReference type="UniPathway" id="UPA00254">
    <property type="reaction ID" value="UER00365"/>
</dbReference>
<dbReference type="EvolutionaryTrace" id="Q8EVF5"/>
<dbReference type="Proteomes" id="UP000002522">
    <property type="component" value="Chromosome"/>
</dbReference>
<dbReference type="GO" id="GO:0005737">
    <property type="term" value="C:cytoplasm"/>
    <property type="evidence" value="ECO:0007669"/>
    <property type="project" value="UniProtKB-SubCell"/>
</dbReference>
<dbReference type="GO" id="GO:0016597">
    <property type="term" value="F:amino acid binding"/>
    <property type="evidence" value="ECO:0007669"/>
    <property type="project" value="InterPro"/>
</dbReference>
<dbReference type="GO" id="GO:0004585">
    <property type="term" value="F:ornithine carbamoyltransferase activity"/>
    <property type="evidence" value="ECO:0007669"/>
    <property type="project" value="UniProtKB-UniRule"/>
</dbReference>
<dbReference type="GO" id="GO:0042450">
    <property type="term" value="P:arginine biosynthetic process via ornithine"/>
    <property type="evidence" value="ECO:0007669"/>
    <property type="project" value="TreeGrafter"/>
</dbReference>
<dbReference type="GO" id="GO:0019547">
    <property type="term" value="P:arginine catabolic process to ornithine"/>
    <property type="evidence" value="ECO:0007669"/>
    <property type="project" value="UniProtKB-UniRule"/>
</dbReference>
<dbReference type="GO" id="GO:0019240">
    <property type="term" value="P:citrulline biosynthetic process"/>
    <property type="evidence" value="ECO:0007669"/>
    <property type="project" value="TreeGrafter"/>
</dbReference>
<dbReference type="Gene3D" id="3.40.50.1370">
    <property type="entry name" value="Aspartate/ornithine carbamoyltransferase"/>
    <property type="match status" value="2"/>
</dbReference>
<dbReference type="HAMAP" id="MF_01109">
    <property type="entry name" value="OTCase"/>
    <property type="match status" value="1"/>
</dbReference>
<dbReference type="InterPro" id="IPR006132">
    <property type="entry name" value="Asp/Orn_carbamoyltranf_P-bd"/>
</dbReference>
<dbReference type="InterPro" id="IPR006130">
    <property type="entry name" value="Asp/Orn_carbamoylTrfase"/>
</dbReference>
<dbReference type="InterPro" id="IPR036901">
    <property type="entry name" value="Asp/Orn_carbamoylTrfase_sf"/>
</dbReference>
<dbReference type="InterPro" id="IPR006131">
    <property type="entry name" value="Asp_carbamoyltransf_Asp/Orn-bd"/>
</dbReference>
<dbReference type="InterPro" id="IPR002292">
    <property type="entry name" value="Orn/put_carbamltrans"/>
</dbReference>
<dbReference type="InterPro" id="IPR024904">
    <property type="entry name" value="OTCase_ArgI"/>
</dbReference>
<dbReference type="NCBIfam" id="TIGR00658">
    <property type="entry name" value="orni_carb_tr"/>
    <property type="match status" value="1"/>
</dbReference>
<dbReference type="PANTHER" id="PTHR45753:SF1">
    <property type="entry name" value="ORNITHINE CARBAMOYLTRANSFERASE, CATABOLIC"/>
    <property type="match status" value="1"/>
</dbReference>
<dbReference type="PANTHER" id="PTHR45753">
    <property type="entry name" value="ORNITHINE CARBAMOYLTRANSFERASE, MITOCHONDRIAL"/>
    <property type="match status" value="1"/>
</dbReference>
<dbReference type="Pfam" id="PF00185">
    <property type="entry name" value="OTCace"/>
    <property type="match status" value="1"/>
</dbReference>
<dbReference type="Pfam" id="PF02729">
    <property type="entry name" value="OTCace_N"/>
    <property type="match status" value="1"/>
</dbReference>
<dbReference type="PRINTS" id="PR00100">
    <property type="entry name" value="AOTCASE"/>
</dbReference>
<dbReference type="PRINTS" id="PR00102">
    <property type="entry name" value="OTCASE"/>
</dbReference>
<dbReference type="SUPFAM" id="SSF53671">
    <property type="entry name" value="Aspartate/ornithine carbamoyltransferase"/>
    <property type="match status" value="1"/>
</dbReference>
<dbReference type="PROSITE" id="PS00097">
    <property type="entry name" value="CARBAMOYLTRANSFERASE"/>
    <property type="match status" value="1"/>
</dbReference>
<comment type="function">
    <text evidence="4">nvolved in the catabolism of arginine. Catalyzes the phosphorolysis of citrulline, the reverse reaction of the biosynthetic one, yielding ornithine and carbamoyl phosphate which serve to generate ATP from ADP.</text>
</comment>
<comment type="catalytic activity">
    <reaction evidence="1">
        <text>carbamoyl phosphate + L-ornithine = L-citrulline + phosphate + H(+)</text>
        <dbReference type="Rhea" id="RHEA:19513"/>
        <dbReference type="ChEBI" id="CHEBI:15378"/>
        <dbReference type="ChEBI" id="CHEBI:43474"/>
        <dbReference type="ChEBI" id="CHEBI:46911"/>
        <dbReference type="ChEBI" id="CHEBI:57743"/>
        <dbReference type="ChEBI" id="CHEBI:58228"/>
        <dbReference type="EC" id="2.1.3.3"/>
    </reaction>
</comment>
<comment type="pathway">
    <text evidence="1">Amino-acid degradation; L-arginine degradation via ADI pathway; carbamoyl phosphate from L-arginine: step 2/2.</text>
</comment>
<comment type="subunit">
    <text evidence="2">Dodecamer (tetramer of trimers).</text>
</comment>
<comment type="subcellular location">
    <subcellularLocation>
        <location evidence="1">Cytoplasm</location>
    </subcellularLocation>
</comment>
<comment type="similarity">
    <text evidence="1">Belongs to the aspartate/ornithine carbamoyltransferase superfamily. OTCase family.</text>
</comment>
<proteinExistence type="evidence at protein level"/>
<protein>
    <recommendedName>
        <fullName evidence="3">Ornithine carbamoyltransferase, catabolic</fullName>
        <shortName evidence="3">OTCase</shortName>
        <ecNumber evidence="1">2.1.3.3</ecNumber>
    </recommendedName>
</protein>
<name>OTCC_MALP2</name>
<accession>Q8EVF5</accession>
<reference key="1">
    <citation type="journal article" date="2002" name="Nucleic Acids Res.">
        <title>The complete genomic sequence of Mycoplasma penetrans, an intracellular bacterial pathogen in humans.</title>
        <authorList>
            <person name="Sasaki Y."/>
            <person name="Ishikawa J."/>
            <person name="Yamashita A."/>
            <person name="Oshima K."/>
            <person name="Kenri T."/>
            <person name="Furuya K."/>
            <person name="Yoshino C."/>
            <person name="Horino A."/>
            <person name="Shiba T."/>
            <person name="Sasaki T."/>
            <person name="Hattori M."/>
        </authorList>
    </citation>
    <scope>NUCLEOTIDE SEQUENCE [LARGE SCALE GENOMIC DNA]</scope>
    <source>
        <strain>HF-2</strain>
    </source>
</reference>
<reference key="2">
    <citation type="journal article" date="2012" name="PLoS ONE">
        <title>Structural characterization of the enzymes composing the arginine deiminase pathway in Mycoplasma penetrans.</title>
        <authorList>
            <person name="Gallego P."/>
            <person name="Planell R."/>
            <person name="Benach J."/>
            <person name="Querol E."/>
            <person name="Perez-Pons J.A."/>
            <person name="Reverter D."/>
        </authorList>
    </citation>
    <scope>X-RAY CRYSTALLOGRAPHY (2.50 ANGSTROMS)</scope>
    <scope>FUNCTION</scope>
    <scope>SUBUNIT</scope>
</reference>
<evidence type="ECO:0000255" key="1">
    <source>
        <dbReference type="HAMAP-Rule" id="MF_01109"/>
    </source>
</evidence>
<evidence type="ECO:0000269" key="2">
    <source>
    </source>
</evidence>
<evidence type="ECO:0000303" key="3">
    <source>
    </source>
</evidence>
<evidence type="ECO:0000305" key="4">
    <source>
    </source>
</evidence>
<evidence type="ECO:0007829" key="5">
    <source>
        <dbReference type="PDB" id="4AMU"/>
    </source>
</evidence>
<evidence type="ECO:0007829" key="6">
    <source>
        <dbReference type="PDB" id="4ANF"/>
    </source>
</evidence>
<feature type="chain" id="PRO_0000112953" description="Ornithine carbamoyltransferase, catabolic">
    <location>
        <begin position="1"/>
        <end position="342"/>
    </location>
</feature>
<feature type="binding site" evidence="1">
    <location>
        <begin position="59"/>
        <end position="62"/>
    </location>
    <ligand>
        <name>carbamoyl phosphate</name>
        <dbReference type="ChEBI" id="CHEBI:58228"/>
    </ligand>
</feature>
<feature type="binding site" evidence="1">
    <location>
        <position position="83"/>
    </location>
    <ligand>
        <name>carbamoyl phosphate</name>
        <dbReference type="ChEBI" id="CHEBI:58228"/>
    </ligand>
</feature>
<feature type="binding site" evidence="1">
    <location>
        <position position="110"/>
    </location>
    <ligand>
        <name>carbamoyl phosphate</name>
        <dbReference type="ChEBI" id="CHEBI:58228"/>
    </ligand>
</feature>
<feature type="binding site" evidence="1">
    <location>
        <begin position="137"/>
        <end position="140"/>
    </location>
    <ligand>
        <name>carbamoyl phosphate</name>
        <dbReference type="ChEBI" id="CHEBI:58228"/>
    </ligand>
</feature>
<feature type="binding site" evidence="1">
    <location>
        <position position="169"/>
    </location>
    <ligand>
        <name>L-ornithine</name>
        <dbReference type="ChEBI" id="CHEBI:46911"/>
    </ligand>
</feature>
<feature type="binding site" evidence="1">
    <location>
        <position position="235"/>
    </location>
    <ligand>
        <name>L-ornithine</name>
        <dbReference type="ChEBI" id="CHEBI:46911"/>
    </ligand>
</feature>
<feature type="binding site" evidence="1">
    <location>
        <begin position="239"/>
        <end position="240"/>
    </location>
    <ligand>
        <name>L-ornithine</name>
        <dbReference type="ChEBI" id="CHEBI:46911"/>
    </ligand>
</feature>
<feature type="binding site" evidence="1">
    <location>
        <begin position="276"/>
        <end position="277"/>
    </location>
    <ligand>
        <name>carbamoyl phosphate</name>
        <dbReference type="ChEBI" id="CHEBI:58228"/>
    </ligand>
</feature>
<feature type="binding site" evidence="1">
    <location>
        <position position="328"/>
    </location>
    <ligand>
        <name>carbamoyl phosphate</name>
        <dbReference type="ChEBI" id="CHEBI:58228"/>
    </ligand>
</feature>
<feature type="helix" evidence="5">
    <location>
        <begin position="13"/>
        <end position="15"/>
    </location>
</feature>
<feature type="helix" evidence="5">
    <location>
        <begin position="18"/>
        <end position="36"/>
    </location>
</feature>
<feature type="turn" evidence="5">
    <location>
        <begin position="37"/>
        <end position="42"/>
    </location>
</feature>
<feature type="turn" evidence="5">
    <location>
        <begin position="45"/>
        <end position="48"/>
    </location>
</feature>
<feature type="strand" evidence="5">
    <location>
        <begin position="50"/>
        <end position="57"/>
    </location>
</feature>
<feature type="helix" evidence="5">
    <location>
        <begin position="60"/>
        <end position="73"/>
    </location>
</feature>
<feature type="strand" evidence="5">
    <location>
        <begin position="76"/>
        <end position="80"/>
    </location>
</feature>
<feature type="helix" evidence="5">
    <location>
        <begin position="82"/>
        <end position="85"/>
    </location>
</feature>
<feature type="strand" evidence="5">
    <location>
        <begin position="88"/>
        <end position="91"/>
    </location>
</feature>
<feature type="helix" evidence="5">
    <location>
        <begin position="93"/>
        <end position="103"/>
    </location>
</feature>
<feature type="strand" evidence="5">
    <location>
        <begin position="105"/>
        <end position="110"/>
    </location>
</feature>
<feature type="helix" evidence="5">
    <location>
        <begin position="114"/>
        <end position="124"/>
    </location>
</feature>
<feature type="strand" evidence="5">
    <location>
        <begin position="128"/>
        <end position="132"/>
    </location>
</feature>
<feature type="helix" evidence="5">
    <location>
        <begin position="138"/>
        <end position="152"/>
    </location>
</feature>
<feature type="strand" evidence="5">
    <location>
        <begin position="159"/>
        <end position="165"/>
    </location>
</feature>
<feature type="helix" evidence="5">
    <location>
        <begin position="169"/>
        <end position="180"/>
    </location>
</feature>
<feature type="strand" evidence="5">
    <location>
        <begin position="184"/>
        <end position="189"/>
    </location>
</feature>
<feature type="helix" evidence="5">
    <location>
        <begin position="191"/>
        <end position="196"/>
    </location>
</feature>
<feature type="helix" evidence="5">
    <location>
        <begin position="199"/>
        <end position="212"/>
    </location>
</feature>
<feature type="strand" evidence="5">
    <location>
        <begin position="215"/>
        <end position="220"/>
    </location>
</feature>
<feature type="helix" evidence="5">
    <location>
        <begin position="222"/>
        <end position="225"/>
    </location>
</feature>
<feature type="turn" evidence="5">
    <location>
        <begin position="226"/>
        <end position="228"/>
    </location>
</feature>
<feature type="strand" evidence="5">
    <location>
        <begin position="230"/>
        <end position="234"/>
    </location>
</feature>
<feature type="helix" evidence="5">
    <location>
        <begin position="244"/>
        <end position="254"/>
    </location>
</feature>
<feature type="helix" evidence="5">
    <location>
        <begin position="261"/>
        <end position="266"/>
    </location>
</feature>
<feature type="strand" evidence="5">
    <location>
        <begin position="272"/>
        <end position="274"/>
    </location>
</feature>
<feature type="strand" evidence="6">
    <location>
        <begin position="281"/>
        <end position="283"/>
    </location>
</feature>
<feature type="helix" evidence="5">
    <location>
        <begin position="286"/>
        <end position="294"/>
    </location>
</feature>
<feature type="strand" evidence="5">
    <location>
        <begin position="295"/>
        <end position="298"/>
    </location>
</feature>
<feature type="helix" evidence="5">
    <location>
        <begin position="300"/>
        <end position="304"/>
    </location>
</feature>
<feature type="helix" evidence="5">
    <location>
        <begin position="311"/>
        <end position="315"/>
    </location>
</feature>
<feature type="helix" evidence="5">
    <location>
        <begin position="321"/>
        <end position="340"/>
    </location>
</feature>
<sequence>MPVNLKGRSLDSLLNFTTEEVQHLIDLSIDLKKAKYQGLHINNRPLVGKNIAILFQKDSTRTRCAFEVAASDLGAGVTYIGPSGSNMGKKESIEDTAKVLGRFYDGIEFRGFAQSDVDALVKYSGVPVWNGLTDDEHPTQIIADFMTMKEKFGNLKNKKIVFIGDYKNNVGVSTMIGAAFNGMHVVMCGPDNYKNEIDKNVLAKCIELFKRNGGSLRFSTDKILAAQDADVIYTDVWVSLGEPFELFDKRIGELKNFQVDMNMIKAAKNDVIFLHCLPAFHDDHTSFSKEVATTLGAKYPIVAKGEMEVTDEVFQSLHNKAFDQAENRMHSIKAIILSTIGY</sequence>
<organism>
    <name type="scientific">Malacoplasma penetrans (strain HF-2)</name>
    <name type="common">Mycoplasma penetrans</name>
    <dbReference type="NCBI Taxonomy" id="272633"/>
    <lineage>
        <taxon>Bacteria</taxon>
        <taxon>Bacillati</taxon>
        <taxon>Mycoplasmatota</taxon>
        <taxon>Mycoplasmoidales</taxon>
        <taxon>Mycoplasmoidaceae</taxon>
        <taxon>Malacoplasma</taxon>
    </lineage>
</organism>